<accession>A7NEJ0</accession>
<dbReference type="EMBL" id="CP000803">
    <property type="protein sequence ID" value="ABU62393.2"/>
    <property type="molecule type" value="Genomic_DNA"/>
</dbReference>
<dbReference type="SMR" id="A7NEJ0"/>
<dbReference type="KEGG" id="fta:FTA_1918"/>
<dbReference type="HOGENOM" id="CLU_070525_1_1_6"/>
<dbReference type="GO" id="GO:0005829">
    <property type="term" value="C:cytosol"/>
    <property type="evidence" value="ECO:0007669"/>
    <property type="project" value="TreeGrafter"/>
</dbReference>
<dbReference type="GO" id="GO:0000028">
    <property type="term" value="P:ribosomal small subunit assembly"/>
    <property type="evidence" value="ECO:0007669"/>
    <property type="project" value="TreeGrafter"/>
</dbReference>
<dbReference type="GO" id="GO:0006412">
    <property type="term" value="P:translation"/>
    <property type="evidence" value="ECO:0007669"/>
    <property type="project" value="TreeGrafter"/>
</dbReference>
<dbReference type="CDD" id="cd01734">
    <property type="entry name" value="YlxS_C"/>
    <property type="match status" value="1"/>
</dbReference>
<dbReference type="FunFam" id="3.30.300.70:FF:000001">
    <property type="entry name" value="Ribosome maturation factor RimP"/>
    <property type="match status" value="1"/>
</dbReference>
<dbReference type="Gene3D" id="2.30.30.180">
    <property type="entry name" value="Ribosome maturation factor RimP, C-terminal domain"/>
    <property type="match status" value="1"/>
</dbReference>
<dbReference type="Gene3D" id="3.30.300.70">
    <property type="entry name" value="RimP-like superfamily, N-terminal"/>
    <property type="match status" value="1"/>
</dbReference>
<dbReference type="HAMAP" id="MF_01077">
    <property type="entry name" value="RimP"/>
    <property type="match status" value="1"/>
</dbReference>
<dbReference type="InterPro" id="IPR003728">
    <property type="entry name" value="Ribosome_maturation_RimP"/>
</dbReference>
<dbReference type="InterPro" id="IPR028998">
    <property type="entry name" value="RimP_C"/>
</dbReference>
<dbReference type="InterPro" id="IPR036847">
    <property type="entry name" value="RimP_C_sf"/>
</dbReference>
<dbReference type="InterPro" id="IPR028989">
    <property type="entry name" value="RimP_N"/>
</dbReference>
<dbReference type="InterPro" id="IPR035956">
    <property type="entry name" value="RimP_N_sf"/>
</dbReference>
<dbReference type="NCBIfam" id="NF011226">
    <property type="entry name" value="PRK14633.1"/>
    <property type="match status" value="1"/>
</dbReference>
<dbReference type="PANTHER" id="PTHR33867">
    <property type="entry name" value="RIBOSOME MATURATION FACTOR RIMP"/>
    <property type="match status" value="1"/>
</dbReference>
<dbReference type="PANTHER" id="PTHR33867:SF1">
    <property type="entry name" value="RIBOSOME MATURATION FACTOR RIMP"/>
    <property type="match status" value="1"/>
</dbReference>
<dbReference type="Pfam" id="PF17384">
    <property type="entry name" value="DUF150_C"/>
    <property type="match status" value="1"/>
</dbReference>
<dbReference type="Pfam" id="PF02576">
    <property type="entry name" value="RimP_N"/>
    <property type="match status" value="1"/>
</dbReference>
<dbReference type="SUPFAM" id="SSF74942">
    <property type="entry name" value="YhbC-like, C-terminal domain"/>
    <property type="match status" value="1"/>
</dbReference>
<dbReference type="SUPFAM" id="SSF75420">
    <property type="entry name" value="YhbC-like, N-terminal domain"/>
    <property type="match status" value="1"/>
</dbReference>
<feature type="chain" id="PRO_1000084525" description="Ribosome maturation factor RimP">
    <location>
        <begin position="1"/>
        <end position="152"/>
    </location>
</feature>
<evidence type="ECO:0000255" key="1">
    <source>
        <dbReference type="HAMAP-Rule" id="MF_01077"/>
    </source>
</evidence>
<sequence>MKMLLDDLYEIVEPITADLGYILWGIEVVGSGKLTIRIFIDHENGVSVDDCQIVSKEISAVFDVEDPVSGKYILEVSSPGMNRQIFNIIQAQALVGFNVKAVTLAPVGSQTKFKGVLERVEGNNVILNLEDGKEISFDFDELKKLRVSPDFS</sequence>
<name>RIMP_FRATF</name>
<reference key="1">
    <citation type="journal article" date="2009" name="PLoS ONE">
        <title>Complete genome sequence of Francisella tularensis subspecies holarctica FTNF002-00.</title>
        <authorList>
            <person name="Barabote R.D."/>
            <person name="Xie G."/>
            <person name="Brettin T.S."/>
            <person name="Hinrichs S.H."/>
            <person name="Fey P.D."/>
            <person name="Jay J.J."/>
            <person name="Engle J.L."/>
            <person name="Godbole S.D."/>
            <person name="Noronha J.M."/>
            <person name="Scheuermann R.H."/>
            <person name="Zhou L.W."/>
            <person name="Lion C."/>
            <person name="Dempsey M.P."/>
        </authorList>
    </citation>
    <scope>NUCLEOTIDE SEQUENCE [LARGE SCALE GENOMIC DNA]</scope>
    <source>
        <strain>FTNF002-00 / FTA</strain>
    </source>
</reference>
<keyword id="KW-0963">Cytoplasm</keyword>
<keyword id="KW-0690">Ribosome biogenesis</keyword>
<gene>
    <name evidence="1" type="primary">rimP</name>
    <name type="ordered locus">FTA_1918</name>
</gene>
<comment type="function">
    <text evidence="1">Required for maturation of 30S ribosomal subunits.</text>
</comment>
<comment type="subcellular location">
    <subcellularLocation>
        <location evidence="1">Cytoplasm</location>
    </subcellularLocation>
</comment>
<comment type="similarity">
    <text evidence="1">Belongs to the RimP family.</text>
</comment>
<proteinExistence type="inferred from homology"/>
<organism>
    <name type="scientific">Francisella tularensis subsp. holarctica (strain FTNF002-00 / FTA)</name>
    <dbReference type="NCBI Taxonomy" id="458234"/>
    <lineage>
        <taxon>Bacteria</taxon>
        <taxon>Pseudomonadati</taxon>
        <taxon>Pseudomonadota</taxon>
        <taxon>Gammaproteobacteria</taxon>
        <taxon>Thiotrichales</taxon>
        <taxon>Francisellaceae</taxon>
        <taxon>Francisella</taxon>
    </lineage>
</organism>
<protein>
    <recommendedName>
        <fullName evidence="1">Ribosome maturation factor RimP</fullName>
    </recommendedName>
</protein>